<proteinExistence type="evidence at protein level"/>
<protein>
    <recommendedName>
        <fullName>Tryptophan N-monooxygenase 1</fullName>
        <ecNumber evidence="3">1.14.14.156</ecNumber>
    </recommendedName>
    <alternativeName>
        <fullName>Cytochrome P450 79B2</fullName>
    </alternativeName>
    <alternativeName>
        <fullName>Tryptophan N-hydroxylase 1</fullName>
    </alternativeName>
</protein>
<sequence>MNTFTSNSSDLTTTATETSSFSTLYLLSTLQAFVAITLVMLLKKLMTDPNKKKPYLPPGPTGWPIIGMIPTMLKSRPVFRWLHSIMKQLNTEIACVKLGNTHVITVTCPKIAREILKQQDALFASRPLTYAQKILSNGYKTCVITPFGDQFKKMRKVVMTELVCPARHRWLHQKRSEENDHLTAWVYNMVKNSGSVDFRFMTRHYCGNAIKKLMFGTRTFSKNTAPDGGPTVEDVEHMEAMFEALGFTFAFCISDYLPMLTGLDLNGHEKIMRESSAIMDKYHDPIIDERIKMWREGKRTQIEDFLDIFISIKDEQGNPLLTADEIKPTIKELVMAAPDNPSNAVEWAMAEMVNKPEILRKAMEEIDRVVGKERLVQESDIPKLNYVKAILREAFRLHPVAAFNLPHVALSDTTVAGYHIPKGSQVLLSRYGLGRNPKVWADPLCFKPERHLNECSEVTLTENDLRFISFSTGKRGCAAPALGTALTTMMLARLLQGFTWKLPENETRVELMESSHDMFLAKPLVMVGDLRLPEHLYPTVK</sequence>
<gene>
    <name type="primary">CYP79B2</name>
    <name type="ordered locus">At4g39950</name>
    <name type="ORF">T5J17.120</name>
</gene>
<comment type="function">
    <text evidence="3 4 5">Converts tryptophan to indole-3-acetaldoxime, a precursor for tryptophan-derived glucosinolates and indole-3-acetic acid (IAA) (PubMed:10681464, PubMed:10922360). Involved in the biosynthetic pathway to 4-hydroxyindole-3-carbonyl nitrile (4-OH-ICN), a cyanogenic metabolite required for inducible pathogen defense (PubMed:26352477).</text>
</comment>
<comment type="catalytic activity">
    <reaction evidence="3">
        <text>L-tryptophan + 2 reduced [NADPH--hemoprotein reductase] + 2 O2 = (E)-(indol-3-yl)acetaldehyde oxime + 2 oxidized [NADPH--hemoprotein reductase] + CO2 + 3 H2O + 2 H(+)</text>
        <dbReference type="Rhea" id="RHEA:33279"/>
        <dbReference type="Rhea" id="RHEA-COMP:11964"/>
        <dbReference type="Rhea" id="RHEA-COMP:11965"/>
        <dbReference type="ChEBI" id="CHEBI:15377"/>
        <dbReference type="ChEBI" id="CHEBI:15378"/>
        <dbReference type="ChEBI" id="CHEBI:15379"/>
        <dbReference type="ChEBI" id="CHEBI:16526"/>
        <dbReference type="ChEBI" id="CHEBI:17545"/>
        <dbReference type="ChEBI" id="CHEBI:57618"/>
        <dbReference type="ChEBI" id="CHEBI:57912"/>
        <dbReference type="ChEBI" id="CHEBI:58210"/>
        <dbReference type="EC" id="1.14.14.156"/>
    </reaction>
</comment>
<comment type="cofactor">
    <cofactor evidence="1">
        <name>heme</name>
        <dbReference type="ChEBI" id="CHEBI:30413"/>
    </cofactor>
</comment>
<comment type="biophysicochemical properties">
    <kinetics>
        <KM evidence="4">21 uM for tryptophan</KM>
    </kinetics>
</comment>
<comment type="subcellular location">
    <subcellularLocation>
        <location evidence="6">Membrane</location>
        <topology evidence="6">Single-pass membrane protein</topology>
    </subcellularLocation>
</comment>
<comment type="tissue specificity">
    <text evidence="4">Found in all tissues tested. Highest expression in roots, and low expression in stem.</text>
</comment>
<comment type="similarity">
    <text evidence="6">Belongs to the cytochrome P450 family.</text>
</comment>
<keyword id="KW-0349">Heme</keyword>
<keyword id="KW-0408">Iron</keyword>
<keyword id="KW-0472">Membrane</keyword>
<keyword id="KW-0479">Metal-binding</keyword>
<keyword id="KW-0503">Monooxygenase</keyword>
<keyword id="KW-0521">NADP</keyword>
<keyword id="KW-0560">Oxidoreductase</keyword>
<keyword id="KW-1185">Reference proteome</keyword>
<keyword id="KW-0812">Transmembrane</keyword>
<keyword id="KW-1133">Transmembrane helix</keyword>
<reference key="1">
    <citation type="journal article" date="1999" name="Nature">
        <title>Sequence and analysis of chromosome 4 of the plant Arabidopsis thaliana.</title>
        <authorList>
            <person name="Mayer K.F.X."/>
            <person name="Schueller C."/>
            <person name="Wambutt R."/>
            <person name="Murphy G."/>
            <person name="Volckaert G."/>
            <person name="Pohl T."/>
            <person name="Duesterhoeft A."/>
            <person name="Stiekema W."/>
            <person name="Entian K.-D."/>
            <person name="Terryn N."/>
            <person name="Harris B."/>
            <person name="Ansorge W."/>
            <person name="Brandt P."/>
            <person name="Grivell L.A."/>
            <person name="Rieger M."/>
            <person name="Weichselgartner M."/>
            <person name="de Simone V."/>
            <person name="Obermaier B."/>
            <person name="Mache R."/>
            <person name="Mueller M."/>
            <person name="Kreis M."/>
            <person name="Delseny M."/>
            <person name="Puigdomenech P."/>
            <person name="Watson M."/>
            <person name="Schmidtheini T."/>
            <person name="Reichert B."/>
            <person name="Portetelle D."/>
            <person name="Perez-Alonso M."/>
            <person name="Boutry M."/>
            <person name="Bancroft I."/>
            <person name="Vos P."/>
            <person name="Hoheisel J."/>
            <person name="Zimmermann W."/>
            <person name="Wedler H."/>
            <person name="Ridley P."/>
            <person name="Langham S.-A."/>
            <person name="McCullagh B."/>
            <person name="Bilham L."/>
            <person name="Robben J."/>
            <person name="van der Schueren J."/>
            <person name="Grymonprez B."/>
            <person name="Chuang Y.-J."/>
            <person name="Vandenbussche F."/>
            <person name="Braeken M."/>
            <person name="Weltjens I."/>
            <person name="Voet M."/>
            <person name="Bastiaens I."/>
            <person name="Aert R."/>
            <person name="Defoor E."/>
            <person name="Weitzenegger T."/>
            <person name="Bothe G."/>
            <person name="Ramsperger U."/>
            <person name="Hilbert H."/>
            <person name="Braun M."/>
            <person name="Holzer E."/>
            <person name="Brandt A."/>
            <person name="Peters S."/>
            <person name="van Staveren M."/>
            <person name="Dirkse W."/>
            <person name="Mooijman P."/>
            <person name="Klein Lankhorst R."/>
            <person name="Rose M."/>
            <person name="Hauf J."/>
            <person name="Koetter P."/>
            <person name="Berneiser S."/>
            <person name="Hempel S."/>
            <person name="Feldpausch M."/>
            <person name="Lamberth S."/>
            <person name="Van den Daele H."/>
            <person name="De Keyser A."/>
            <person name="Buysshaert C."/>
            <person name="Gielen J."/>
            <person name="Villarroel R."/>
            <person name="De Clercq R."/>
            <person name="van Montagu M."/>
            <person name="Rogers J."/>
            <person name="Cronin A."/>
            <person name="Quail M.A."/>
            <person name="Bray-Allen S."/>
            <person name="Clark L."/>
            <person name="Doggett J."/>
            <person name="Hall S."/>
            <person name="Kay M."/>
            <person name="Lennard N."/>
            <person name="McLay K."/>
            <person name="Mayes R."/>
            <person name="Pettett A."/>
            <person name="Rajandream M.A."/>
            <person name="Lyne M."/>
            <person name="Benes V."/>
            <person name="Rechmann S."/>
            <person name="Borkova D."/>
            <person name="Bloecker H."/>
            <person name="Scharfe M."/>
            <person name="Grimm M."/>
            <person name="Loehnert T.-H."/>
            <person name="Dose S."/>
            <person name="de Haan M."/>
            <person name="Maarse A.C."/>
            <person name="Schaefer M."/>
            <person name="Mueller-Auer S."/>
            <person name="Gabel C."/>
            <person name="Fuchs M."/>
            <person name="Fartmann B."/>
            <person name="Granderath K."/>
            <person name="Dauner D."/>
            <person name="Herzl A."/>
            <person name="Neumann S."/>
            <person name="Argiriou A."/>
            <person name="Vitale D."/>
            <person name="Liguori R."/>
            <person name="Piravandi E."/>
            <person name="Massenet O."/>
            <person name="Quigley F."/>
            <person name="Clabauld G."/>
            <person name="Muendlein A."/>
            <person name="Felber R."/>
            <person name="Schnabl S."/>
            <person name="Hiller R."/>
            <person name="Schmidt W."/>
            <person name="Lecharny A."/>
            <person name="Aubourg S."/>
            <person name="Chefdor F."/>
            <person name="Cooke R."/>
            <person name="Berger C."/>
            <person name="Monfort A."/>
            <person name="Casacuberta E."/>
            <person name="Gibbons T."/>
            <person name="Weber N."/>
            <person name="Vandenbol M."/>
            <person name="Bargues M."/>
            <person name="Terol J."/>
            <person name="Torres A."/>
            <person name="Perez-Perez A."/>
            <person name="Purnelle B."/>
            <person name="Bent E."/>
            <person name="Johnson S."/>
            <person name="Tacon D."/>
            <person name="Jesse T."/>
            <person name="Heijnen L."/>
            <person name="Schwarz S."/>
            <person name="Scholler P."/>
            <person name="Heber S."/>
            <person name="Francs P."/>
            <person name="Bielke C."/>
            <person name="Frishman D."/>
            <person name="Haase D."/>
            <person name="Lemcke K."/>
            <person name="Mewes H.-W."/>
            <person name="Stocker S."/>
            <person name="Zaccaria P."/>
            <person name="Bevan M."/>
            <person name="Wilson R.K."/>
            <person name="de la Bastide M."/>
            <person name="Habermann K."/>
            <person name="Parnell L."/>
            <person name="Dedhia N."/>
            <person name="Gnoj L."/>
            <person name="Schutz K."/>
            <person name="Huang E."/>
            <person name="Spiegel L."/>
            <person name="Sekhon M."/>
            <person name="Murray J."/>
            <person name="Sheet P."/>
            <person name="Cordes M."/>
            <person name="Abu-Threideh J."/>
            <person name="Stoneking T."/>
            <person name="Kalicki J."/>
            <person name="Graves T."/>
            <person name="Harmon G."/>
            <person name="Edwards J."/>
            <person name="Latreille P."/>
            <person name="Courtney L."/>
            <person name="Cloud J."/>
            <person name="Abbott A."/>
            <person name="Scott K."/>
            <person name="Johnson D."/>
            <person name="Minx P."/>
            <person name="Bentley D."/>
            <person name="Fulton B."/>
            <person name="Miller N."/>
            <person name="Greco T."/>
            <person name="Kemp K."/>
            <person name="Kramer J."/>
            <person name="Fulton L."/>
            <person name="Mardis E."/>
            <person name="Dante M."/>
            <person name="Pepin K."/>
            <person name="Hillier L.W."/>
            <person name="Nelson J."/>
            <person name="Spieth J."/>
            <person name="Ryan E."/>
            <person name="Andrews S."/>
            <person name="Geisel C."/>
            <person name="Layman D."/>
            <person name="Du H."/>
            <person name="Ali J."/>
            <person name="Berghoff A."/>
            <person name="Jones K."/>
            <person name="Drone K."/>
            <person name="Cotton M."/>
            <person name="Joshu C."/>
            <person name="Antonoiu B."/>
            <person name="Zidanic M."/>
            <person name="Strong C."/>
            <person name="Sun H."/>
            <person name="Lamar B."/>
            <person name="Yordan C."/>
            <person name="Ma P."/>
            <person name="Zhong J."/>
            <person name="Preston R."/>
            <person name="Vil D."/>
            <person name="Shekher M."/>
            <person name="Matero A."/>
            <person name="Shah R."/>
            <person name="Swaby I.K."/>
            <person name="O'Shaughnessy A."/>
            <person name="Rodriguez M."/>
            <person name="Hoffman J."/>
            <person name="Till S."/>
            <person name="Granat S."/>
            <person name="Shohdy N."/>
            <person name="Hasegawa A."/>
            <person name="Hameed A."/>
            <person name="Lodhi M."/>
            <person name="Johnson A."/>
            <person name="Chen E."/>
            <person name="Marra M.A."/>
            <person name="Martienssen R."/>
            <person name="McCombie W.R."/>
        </authorList>
    </citation>
    <scope>NUCLEOTIDE SEQUENCE [LARGE SCALE GENOMIC DNA]</scope>
    <source>
        <strain>cv. Columbia</strain>
    </source>
</reference>
<reference key="2">
    <citation type="journal article" date="2017" name="Plant J.">
        <title>Araport11: a complete reannotation of the Arabidopsis thaliana reference genome.</title>
        <authorList>
            <person name="Cheng C.Y."/>
            <person name="Krishnakumar V."/>
            <person name="Chan A.P."/>
            <person name="Thibaud-Nissen F."/>
            <person name="Schobel S."/>
            <person name="Town C.D."/>
        </authorList>
    </citation>
    <scope>GENOME REANNOTATION</scope>
    <source>
        <strain>cv. Columbia</strain>
    </source>
</reference>
<reference key="3">
    <citation type="journal article" date="2003" name="Science">
        <title>Empirical analysis of transcriptional activity in the Arabidopsis genome.</title>
        <authorList>
            <person name="Yamada K."/>
            <person name="Lim J."/>
            <person name="Dale J.M."/>
            <person name="Chen H."/>
            <person name="Shinn P."/>
            <person name="Palm C.J."/>
            <person name="Southwick A.M."/>
            <person name="Wu H.C."/>
            <person name="Kim C.J."/>
            <person name="Nguyen M."/>
            <person name="Pham P.K."/>
            <person name="Cheuk R.F."/>
            <person name="Karlin-Newmann G."/>
            <person name="Liu S.X."/>
            <person name="Lam B."/>
            <person name="Sakano H."/>
            <person name="Wu T."/>
            <person name="Yu G."/>
            <person name="Miranda M."/>
            <person name="Quach H.L."/>
            <person name="Tripp M."/>
            <person name="Chang C.H."/>
            <person name="Lee J.M."/>
            <person name="Toriumi M.J."/>
            <person name="Chan M.M."/>
            <person name="Tang C.C."/>
            <person name="Onodera C.S."/>
            <person name="Deng J.M."/>
            <person name="Akiyama K."/>
            <person name="Ansari Y."/>
            <person name="Arakawa T."/>
            <person name="Banh J."/>
            <person name="Banno F."/>
            <person name="Bowser L."/>
            <person name="Brooks S.Y."/>
            <person name="Carninci P."/>
            <person name="Chao Q."/>
            <person name="Choy N."/>
            <person name="Enju A."/>
            <person name="Goldsmith A.D."/>
            <person name="Gurjal M."/>
            <person name="Hansen N.F."/>
            <person name="Hayashizaki Y."/>
            <person name="Johnson-Hopson C."/>
            <person name="Hsuan V.W."/>
            <person name="Iida K."/>
            <person name="Karnes M."/>
            <person name="Khan S."/>
            <person name="Koesema E."/>
            <person name="Ishida J."/>
            <person name="Jiang P.X."/>
            <person name="Jones T."/>
            <person name="Kawai J."/>
            <person name="Kamiya A."/>
            <person name="Meyers C."/>
            <person name="Nakajima M."/>
            <person name="Narusaka M."/>
            <person name="Seki M."/>
            <person name="Sakurai T."/>
            <person name="Satou M."/>
            <person name="Tamse R."/>
            <person name="Vaysberg M."/>
            <person name="Wallender E.K."/>
            <person name="Wong C."/>
            <person name="Yamamura Y."/>
            <person name="Yuan S."/>
            <person name="Shinozaki K."/>
            <person name="Davis R.W."/>
            <person name="Theologis A."/>
            <person name="Ecker J.R."/>
        </authorList>
    </citation>
    <scope>NUCLEOTIDE SEQUENCE [LARGE SCALE MRNA]</scope>
    <source>
        <strain>cv. Columbia</strain>
    </source>
</reference>
<reference key="4">
    <citation type="journal article" date="1998" name="Plant Mol. Biol.">
        <title>The presence of CYP79 homologues in glucosinolate-producing plants shows evolutionary conservation of the enzymes in the conversion of amino acid to aldoxime in the biosynthesis of cyanogenic glucosides and glucosinolates.</title>
        <authorList>
            <person name="Bak S."/>
            <person name="Nielsen H.L."/>
            <person name="Halkier B.A."/>
        </authorList>
    </citation>
    <scope>NUCLEOTIDE SEQUENCE [MRNA] OF 160-541</scope>
</reference>
<reference key="5">
    <citation type="journal article" date="2000" name="J. Biol. Chem.">
        <title>Cytochrome P450 CYP79B2 from Arabidopsis catalyzes the conversion of tryptophan to indole-3-acetaldoxime, a precursor of indole glucosinolates and indole-3-acetic acid.</title>
        <authorList>
            <person name="Mikkelsen M.D."/>
            <person name="Hansen C.H."/>
            <person name="Wittstock U."/>
            <person name="Halkier B.A."/>
        </authorList>
    </citation>
    <scope>FUNCTION</scope>
    <scope>CHARACTERIZATION</scope>
    <scope>TISSUE SPECIFICITY</scope>
    <scope>BIOPHYSICOCHEMICAL PROPERTIES</scope>
</reference>
<reference key="6">
    <citation type="journal article" date="2000" name="Proc. Natl. Acad. Sci. U.S.A.">
        <title>Arabidopsis cytochrome P450s that catalyze the first step of tryptophan-dependent indole-3-acetic acid biosynthesis.</title>
        <authorList>
            <person name="Hull A.K."/>
            <person name="Vij R."/>
            <person name="Celenza J.L."/>
        </authorList>
    </citation>
    <scope>FUNCTION</scope>
    <scope>CATALYTIC ACTIVITY</scope>
    <scope>MUTAGENESIS OF CYS-477</scope>
</reference>
<reference key="7">
    <citation type="journal article" date="2015" name="Nature">
        <title>A new cyanogenic metabolite in Arabidopsis required for inducible pathogen defence.</title>
        <authorList>
            <person name="Rajniak J."/>
            <person name="Barco B."/>
            <person name="Clay N.K."/>
            <person name="Sattely E.S."/>
        </authorList>
    </citation>
    <scope>FUNCTION</scope>
</reference>
<accession>O81346</accession>
<accession>Q9SMR0</accession>
<name>C79B2_ARATH</name>
<feature type="chain" id="PRO_0000052154" description="Tryptophan N-monooxygenase 1">
    <location>
        <begin position="1"/>
        <end position="541"/>
    </location>
</feature>
<feature type="transmembrane region" description="Helical" evidence="2">
    <location>
        <begin position="21"/>
        <end position="41"/>
    </location>
</feature>
<feature type="binding site" description="axial binding residue" evidence="1">
    <location>
        <position position="477"/>
    </location>
    <ligand>
        <name>heme</name>
        <dbReference type="ChEBI" id="CHEBI:30413"/>
    </ligand>
    <ligandPart>
        <name>Fe</name>
        <dbReference type="ChEBI" id="CHEBI:18248"/>
    </ligandPart>
</feature>
<feature type="mutagenesis site" description="Complete loss of activity." evidence="3">
    <original>C</original>
    <variation>A</variation>
    <location>
        <position position="477"/>
    </location>
</feature>
<dbReference type="EC" id="1.14.14.156" evidence="3"/>
<dbReference type="EMBL" id="AL035708">
    <property type="protein sequence ID" value="CAB38908.1"/>
    <property type="molecule type" value="Genomic_DNA"/>
</dbReference>
<dbReference type="EMBL" id="AL161596">
    <property type="protein sequence ID" value="CAB80658.1"/>
    <property type="molecule type" value="Genomic_DNA"/>
</dbReference>
<dbReference type="EMBL" id="CP002687">
    <property type="protein sequence ID" value="AEE87143.1"/>
    <property type="molecule type" value="Genomic_DNA"/>
</dbReference>
<dbReference type="EMBL" id="AF069495">
    <property type="protein sequence ID" value="AAD03416.1"/>
    <property type="molecule type" value="mRNA"/>
</dbReference>
<dbReference type="EMBL" id="AY046017">
    <property type="protein sequence ID" value="AAK76691.1"/>
    <property type="molecule type" value="mRNA"/>
</dbReference>
<dbReference type="EMBL" id="AY091437">
    <property type="protein sequence ID" value="AAM14376.1"/>
    <property type="molecule type" value="mRNA"/>
</dbReference>
<dbReference type="PIR" id="T06101">
    <property type="entry name" value="T06101"/>
</dbReference>
<dbReference type="PIR" id="T51718">
    <property type="entry name" value="T51718"/>
</dbReference>
<dbReference type="RefSeq" id="NP_195705.1">
    <property type="nucleotide sequence ID" value="NM_120158.2"/>
</dbReference>
<dbReference type="SMR" id="O81346"/>
<dbReference type="BioGRID" id="15434">
    <property type="interactions" value="2"/>
</dbReference>
<dbReference type="ComplexPortal" id="CPX-2833">
    <property type="entry name" value="Camalexin biosynthetic metabolon complex"/>
</dbReference>
<dbReference type="FunCoup" id="O81346">
    <property type="interactions" value="94"/>
</dbReference>
<dbReference type="IntAct" id="O81346">
    <property type="interactions" value="5"/>
</dbReference>
<dbReference type="STRING" id="3702.O81346"/>
<dbReference type="GlyGen" id="O81346">
    <property type="glycosylation" value="2 sites"/>
</dbReference>
<dbReference type="iPTMnet" id="O81346"/>
<dbReference type="PaxDb" id="3702-AT4G39950.1"/>
<dbReference type="ProteomicsDB" id="239140"/>
<dbReference type="EnsemblPlants" id="AT4G39950.1">
    <property type="protein sequence ID" value="AT4G39950.1"/>
    <property type="gene ID" value="AT4G39950"/>
</dbReference>
<dbReference type="GeneID" id="830154"/>
<dbReference type="Gramene" id="AT4G39950.1">
    <property type="protein sequence ID" value="AT4G39950.1"/>
    <property type="gene ID" value="AT4G39950"/>
</dbReference>
<dbReference type="KEGG" id="ath:AT4G39950"/>
<dbReference type="Araport" id="AT4G39950"/>
<dbReference type="TAIR" id="AT4G39950">
    <property type="gene designation" value="CYP79B2"/>
</dbReference>
<dbReference type="eggNOG" id="KOG0156">
    <property type="taxonomic scope" value="Eukaryota"/>
</dbReference>
<dbReference type="HOGENOM" id="CLU_001570_4_0_1"/>
<dbReference type="InParanoid" id="O81346"/>
<dbReference type="OMA" id="VAQHYSC"/>
<dbReference type="PhylomeDB" id="O81346"/>
<dbReference type="BioCyc" id="ARA:AT4G39950-MONOMER"/>
<dbReference type="BioCyc" id="MetaCyc:AT4G39950-MONOMER"/>
<dbReference type="BRENDA" id="1.14.14.156">
    <property type="organism ID" value="399"/>
</dbReference>
<dbReference type="SABIO-RK" id="O81346"/>
<dbReference type="PRO" id="PR:O81346"/>
<dbReference type="Proteomes" id="UP000006548">
    <property type="component" value="Chromosome 4"/>
</dbReference>
<dbReference type="ExpressionAtlas" id="O81346">
    <property type="expression patterns" value="baseline and differential"/>
</dbReference>
<dbReference type="GO" id="GO:0016020">
    <property type="term" value="C:membrane"/>
    <property type="evidence" value="ECO:0007669"/>
    <property type="project" value="UniProtKB-SubCell"/>
</dbReference>
<dbReference type="GO" id="GO:0020037">
    <property type="term" value="F:heme binding"/>
    <property type="evidence" value="ECO:0007669"/>
    <property type="project" value="InterPro"/>
</dbReference>
<dbReference type="GO" id="GO:0005506">
    <property type="term" value="F:iron ion binding"/>
    <property type="evidence" value="ECO:0007669"/>
    <property type="project" value="InterPro"/>
</dbReference>
<dbReference type="GO" id="GO:0090489">
    <property type="term" value="F:tryptophan N-monooxygenase activity"/>
    <property type="evidence" value="ECO:0007669"/>
    <property type="project" value="UniProtKB-EC"/>
</dbReference>
<dbReference type="GO" id="GO:0010120">
    <property type="term" value="P:camalexin biosynthetic process"/>
    <property type="evidence" value="ECO:0000304"/>
    <property type="project" value="TAIR"/>
</dbReference>
<dbReference type="GO" id="GO:0006952">
    <property type="term" value="P:defense response"/>
    <property type="evidence" value="ECO:0000315"/>
    <property type="project" value="TAIR"/>
</dbReference>
<dbReference type="GO" id="GO:0052544">
    <property type="term" value="P:defense response by callose deposition in cell wall"/>
    <property type="evidence" value="ECO:0000315"/>
    <property type="project" value="TAIR"/>
</dbReference>
<dbReference type="GO" id="GO:0042742">
    <property type="term" value="P:defense response to bacterium"/>
    <property type="evidence" value="ECO:0000315"/>
    <property type="project" value="TAIR"/>
</dbReference>
<dbReference type="GO" id="GO:0002229">
    <property type="term" value="P:defense response to oomycetes"/>
    <property type="evidence" value="ECO:0000316"/>
    <property type="project" value="TAIR"/>
</dbReference>
<dbReference type="GO" id="GO:0009684">
    <property type="term" value="P:indoleacetic acid biosynthetic process"/>
    <property type="evidence" value="ECO:0000315"/>
    <property type="project" value="TAIR"/>
</dbReference>
<dbReference type="GO" id="GO:0009682">
    <property type="term" value="P:induced systemic resistance"/>
    <property type="evidence" value="ECO:0000315"/>
    <property type="project" value="TAIR"/>
</dbReference>
<dbReference type="GO" id="GO:0006569">
    <property type="term" value="P:L-tryptophan catabolic process"/>
    <property type="evidence" value="ECO:0000314"/>
    <property type="project" value="TAIR"/>
</dbReference>
<dbReference type="GO" id="GO:0009617">
    <property type="term" value="P:response to bacterium"/>
    <property type="evidence" value="ECO:0000315"/>
    <property type="project" value="TAIR"/>
</dbReference>
<dbReference type="GO" id="GO:0009625">
    <property type="term" value="P:response to insect"/>
    <property type="evidence" value="ECO:0000270"/>
    <property type="project" value="TAIR"/>
</dbReference>
<dbReference type="GO" id="GO:0009414">
    <property type="term" value="P:response to water deprivation"/>
    <property type="evidence" value="ECO:0000270"/>
    <property type="project" value="TAIR"/>
</dbReference>
<dbReference type="CDD" id="cd20658">
    <property type="entry name" value="CYP79"/>
    <property type="match status" value="1"/>
</dbReference>
<dbReference type="FunFam" id="1.10.630.10:FF:000037">
    <property type="entry name" value="Cytochrome P450 9"/>
    <property type="match status" value="1"/>
</dbReference>
<dbReference type="Gene3D" id="1.10.630.10">
    <property type="entry name" value="Cytochrome P450"/>
    <property type="match status" value="1"/>
</dbReference>
<dbReference type="InterPro" id="IPR001128">
    <property type="entry name" value="Cyt_P450"/>
</dbReference>
<dbReference type="InterPro" id="IPR017972">
    <property type="entry name" value="Cyt_P450_CS"/>
</dbReference>
<dbReference type="InterPro" id="IPR002401">
    <property type="entry name" value="Cyt_P450_E_grp-I"/>
</dbReference>
<dbReference type="InterPro" id="IPR036396">
    <property type="entry name" value="Cyt_P450_sf"/>
</dbReference>
<dbReference type="PANTHER" id="PTHR47944">
    <property type="entry name" value="CYTOCHROME P450 98A9"/>
    <property type="match status" value="1"/>
</dbReference>
<dbReference type="PANTHER" id="PTHR47944:SF4">
    <property type="entry name" value="OS09G0441700 PROTEIN"/>
    <property type="match status" value="1"/>
</dbReference>
<dbReference type="Pfam" id="PF00067">
    <property type="entry name" value="p450"/>
    <property type="match status" value="1"/>
</dbReference>
<dbReference type="PRINTS" id="PR00463">
    <property type="entry name" value="EP450I"/>
</dbReference>
<dbReference type="PRINTS" id="PR00385">
    <property type="entry name" value="P450"/>
</dbReference>
<dbReference type="SUPFAM" id="SSF48264">
    <property type="entry name" value="Cytochrome P450"/>
    <property type="match status" value="1"/>
</dbReference>
<dbReference type="PROSITE" id="PS00086">
    <property type="entry name" value="CYTOCHROME_P450"/>
    <property type="match status" value="1"/>
</dbReference>
<organism>
    <name type="scientific">Arabidopsis thaliana</name>
    <name type="common">Mouse-ear cress</name>
    <dbReference type="NCBI Taxonomy" id="3702"/>
    <lineage>
        <taxon>Eukaryota</taxon>
        <taxon>Viridiplantae</taxon>
        <taxon>Streptophyta</taxon>
        <taxon>Embryophyta</taxon>
        <taxon>Tracheophyta</taxon>
        <taxon>Spermatophyta</taxon>
        <taxon>Magnoliopsida</taxon>
        <taxon>eudicotyledons</taxon>
        <taxon>Gunneridae</taxon>
        <taxon>Pentapetalae</taxon>
        <taxon>rosids</taxon>
        <taxon>malvids</taxon>
        <taxon>Brassicales</taxon>
        <taxon>Brassicaceae</taxon>
        <taxon>Camelineae</taxon>
        <taxon>Arabidopsis</taxon>
    </lineage>
</organism>
<evidence type="ECO:0000250" key="1">
    <source>
        <dbReference type="UniProtKB" id="Q96242"/>
    </source>
</evidence>
<evidence type="ECO:0000255" key="2"/>
<evidence type="ECO:0000269" key="3">
    <source>
    </source>
</evidence>
<evidence type="ECO:0000269" key="4">
    <source>
    </source>
</evidence>
<evidence type="ECO:0000269" key="5">
    <source>
    </source>
</evidence>
<evidence type="ECO:0000305" key="6"/>